<evidence type="ECO:0000255" key="1">
    <source>
        <dbReference type="HAMAP-Rule" id="MF_00246"/>
    </source>
</evidence>
<dbReference type="EC" id="2.7.1.6" evidence="1"/>
<dbReference type="EMBL" id="CP000950">
    <property type="protein sequence ID" value="ACA69219.1"/>
    <property type="molecule type" value="Genomic_DNA"/>
</dbReference>
<dbReference type="RefSeq" id="WP_002210748.1">
    <property type="nucleotide sequence ID" value="NZ_CP009792.1"/>
</dbReference>
<dbReference type="SMR" id="B1JST8"/>
<dbReference type="GeneID" id="57977277"/>
<dbReference type="KEGG" id="ypy:YPK_2945"/>
<dbReference type="PATRIC" id="fig|502800.11.peg.3666"/>
<dbReference type="UniPathway" id="UPA00214"/>
<dbReference type="GO" id="GO:0005829">
    <property type="term" value="C:cytosol"/>
    <property type="evidence" value="ECO:0007669"/>
    <property type="project" value="TreeGrafter"/>
</dbReference>
<dbReference type="GO" id="GO:0005524">
    <property type="term" value="F:ATP binding"/>
    <property type="evidence" value="ECO:0007669"/>
    <property type="project" value="UniProtKB-UniRule"/>
</dbReference>
<dbReference type="GO" id="GO:0004335">
    <property type="term" value="F:galactokinase activity"/>
    <property type="evidence" value="ECO:0007669"/>
    <property type="project" value="UniProtKB-UniRule"/>
</dbReference>
<dbReference type="GO" id="GO:0000287">
    <property type="term" value="F:magnesium ion binding"/>
    <property type="evidence" value="ECO:0007669"/>
    <property type="project" value="UniProtKB-UniRule"/>
</dbReference>
<dbReference type="GO" id="GO:0006012">
    <property type="term" value="P:galactose metabolic process"/>
    <property type="evidence" value="ECO:0007669"/>
    <property type="project" value="UniProtKB-UniRule"/>
</dbReference>
<dbReference type="FunFam" id="3.30.230.10:FF:000017">
    <property type="entry name" value="Galactokinase"/>
    <property type="match status" value="1"/>
</dbReference>
<dbReference type="FunFam" id="3.30.70.890:FF:000001">
    <property type="entry name" value="Galactokinase"/>
    <property type="match status" value="1"/>
</dbReference>
<dbReference type="Gene3D" id="3.30.230.10">
    <property type="match status" value="1"/>
</dbReference>
<dbReference type="Gene3D" id="3.30.70.890">
    <property type="entry name" value="GHMP kinase, C-terminal domain"/>
    <property type="match status" value="1"/>
</dbReference>
<dbReference type="HAMAP" id="MF_00246">
    <property type="entry name" value="Galactokinase"/>
    <property type="match status" value="1"/>
</dbReference>
<dbReference type="InterPro" id="IPR000705">
    <property type="entry name" value="Galactokinase"/>
</dbReference>
<dbReference type="InterPro" id="IPR022963">
    <property type="entry name" value="Galactokinase_bac"/>
</dbReference>
<dbReference type="InterPro" id="IPR019741">
    <property type="entry name" value="Galactokinase_CS"/>
</dbReference>
<dbReference type="InterPro" id="IPR019539">
    <property type="entry name" value="GalKase_N"/>
</dbReference>
<dbReference type="InterPro" id="IPR013750">
    <property type="entry name" value="GHMP_kinase_C_dom"/>
</dbReference>
<dbReference type="InterPro" id="IPR036554">
    <property type="entry name" value="GHMP_kinase_C_sf"/>
</dbReference>
<dbReference type="InterPro" id="IPR006204">
    <property type="entry name" value="GHMP_kinase_N_dom"/>
</dbReference>
<dbReference type="InterPro" id="IPR006203">
    <property type="entry name" value="GHMP_knse_ATP-bd_CS"/>
</dbReference>
<dbReference type="InterPro" id="IPR006206">
    <property type="entry name" value="Mevalonate/galactokinase"/>
</dbReference>
<dbReference type="InterPro" id="IPR020568">
    <property type="entry name" value="Ribosomal_Su5_D2-typ_SF"/>
</dbReference>
<dbReference type="InterPro" id="IPR014721">
    <property type="entry name" value="Ribsml_uS5_D2-typ_fold_subgr"/>
</dbReference>
<dbReference type="NCBIfam" id="TIGR00131">
    <property type="entry name" value="gal_kin"/>
    <property type="match status" value="1"/>
</dbReference>
<dbReference type="NCBIfam" id="NF003472">
    <property type="entry name" value="PRK05101.1"/>
    <property type="match status" value="1"/>
</dbReference>
<dbReference type="PANTHER" id="PTHR10457:SF7">
    <property type="entry name" value="GALACTOKINASE-RELATED"/>
    <property type="match status" value="1"/>
</dbReference>
<dbReference type="PANTHER" id="PTHR10457">
    <property type="entry name" value="MEVALONATE KINASE/GALACTOKINASE"/>
    <property type="match status" value="1"/>
</dbReference>
<dbReference type="Pfam" id="PF10509">
    <property type="entry name" value="GalKase_gal_bdg"/>
    <property type="match status" value="1"/>
</dbReference>
<dbReference type="Pfam" id="PF08544">
    <property type="entry name" value="GHMP_kinases_C"/>
    <property type="match status" value="1"/>
</dbReference>
<dbReference type="Pfam" id="PF00288">
    <property type="entry name" value="GHMP_kinases_N"/>
    <property type="match status" value="1"/>
</dbReference>
<dbReference type="PIRSF" id="PIRSF000530">
    <property type="entry name" value="Galactokinase"/>
    <property type="match status" value="1"/>
</dbReference>
<dbReference type="PRINTS" id="PR00473">
    <property type="entry name" value="GALCTOKINASE"/>
</dbReference>
<dbReference type="PRINTS" id="PR00959">
    <property type="entry name" value="MEVGALKINASE"/>
</dbReference>
<dbReference type="SUPFAM" id="SSF55060">
    <property type="entry name" value="GHMP Kinase, C-terminal domain"/>
    <property type="match status" value="1"/>
</dbReference>
<dbReference type="SUPFAM" id="SSF54211">
    <property type="entry name" value="Ribosomal protein S5 domain 2-like"/>
    <property type="match status" value="1"/>
</dbReference>
<dbReference type="PROSITE" id="PS00106">
    <property type="entry name" value="GALACTOKINASE"/>
    <property type="match status" value="1"/>
</dbReference>
<dbReference type="PROSITE" id="PS00627">
    <property type="entry name" value="GHMP_KINASES_ATP"/>
    <property type="match status" value="1"/>
</dbReference>
<name>GAL1_YERPY</name>
<accession>B1JST8</accession>
<feature type="chain" id="PRO_1000100851" description="Galactokinase">
    <location>
        <begin position="1"/>
        <end position="383"/>
    </location>
</feature>
<feature type="active site" description="Proton acceptor" evidence="1">
    <location>
        <position position="174"/>
    </location>
</feature>
<feature type="binding site" evidence="1">
    <location>
        <begin position="34"/>
        <end position="37"/>
    </location>
    <ligand>
        <name>substrate</name>
    </ligand>
</feature>
<feature type="binding site" evidence="1">
    <location>
        <begin position="124"/>
        <end position="130"/>
    </location>
    <ligand>
        <name>ATP</name>
        <dbReference type="ChEBI" id="CHEBI:30616"/>
    </ligand>
</feature>
<feature type="binding site" evidence="1">
    <location>
        <position position="130"/>
    </location>
    <ligand>
        <name>Mg(2+)</name>
        <dbReference type="ChEBI" id="CHEBI:18420"/>
    </ligand>
</feature>
<feature type="binding site" evidence="1">
    <location>
        <position position="162"/>
    </location>
    <ligand>
        <name>Mg(2+)</name>
        <dbReference type="ChEBI" id="CHEBI:18420"/>
    </ligand>
</feature>
<feature type="binding site" evidence="1">
    <location>
        <position position="223"/>
    </location>
    <ligand>
        <name>substrate</name>
    </ligand>
</feature>
<feature type="site" description="Transition state stabilizer" evidence="1">
    <location>
        <position position="28"/>
    </location>
</feature>
<keyword id="KW-0067">ATP-binding</keyword>
<keyword id="KW-0119">Carbohydrate metabolism</keyword>
<keyword id="KW-0963">Cytoplasm</keyword>
<keyword id="KW-0299">Galactose metabolism</keyword>
<keyword id="KW-0418">Kinase</keyword>
<keyword id="KW-0460">Magnesium</keyword>
<keyword id="KW-0479">Metal-binding</keyword>
<keyword id="KW-0547">Nucleotide-binding</keyword>
<keyword id="KW-0808">Transferase</keyword>
<comment type="function">
    <text evidence="1">Catalyzes the transfer of the gamma-phosphate of ATP to D-galactose to form alpha-D-galactose-1-phosphate (Gal-1-P).</text>
</comment>
<comment type="catalytic activity">
    <reaction evidence="1">
        <text>alpha-D-galactose + ATP = alpha-D-galactose 1-phosphate + ADP + H(+)</text>
        <dbReference type="Rhea" id="RHEA:13553"/>
        <dbReference type="ChEBI" id="CHEBI:15378"/>
        <dbReference type="ChEBI" id="CHEBI:28061"/>
        <dbReference type="ChEBI" id="CHEBI:30616"/>
        <dbReference type="ChEBI" id="CHEBI:58336"/>
        <dbReference type="ChEBI" id="CHEBI:456216"/>
        <dbReference type="EC" id="2.7.1.6"/>
    </reaction>
</comment>
<comment type="pathway">
    <text evidence="1">Carbohydrate metabolism; galactose metabolism.</text>
</comment>
<comment type="subcellular location">
    <subcellularLocation>
        <location evidence="1">Cytoplasm</location>
    </subcellularLocation>
</comment>
<comment type="similarity">
    <text evidence="1">Belongs to the GHMP kinase family. GalK subfamily.</text>
</comment>
<protein>
    <recommendedName>
        <fullName evidence="1">Galactokinase</fullName>
        <ecNumber evidence="1">2.7.1.6</ecNumber>
    </recommendedName>
    <alternativeName>
        <fullName evidence="1">Galactose kinase</fullName>
    </alternativeName>
</protein>
<proteinExistence type="inferred from homology"/>
<gene>
    <name evidence="1" type="primary">galK</name>
    <name type="ordered locus">YPK_2945</name>
</gene>
<organism>
    <name type="scientific">Yersinia pseudotuberculosis serotype O:3 (strain YPIII)</name>
    <dbReference type="NCBI Taxonomy" id="502800"/>
    <lineage>
        <taxon>Bacteria</taxon>
        <taxon>Pseudomonadati</taxon>
        <taxon>Pseudomonadota</taxon>
        <taxon>Gammaproteobacteria</taxon>
        <taxon>Enterobacterales</taxon>
        <taxon>Yersiniaceae</taxon>
        <taxon>Yersinia</taxon>
    </lineage>
</organism>
<reference key="1">
    <citation type="submission" date="2008-02" db="EMBL/GenBank/DDBJ databases">
        <title>Complete sequence of Yersinia pseudotuberculosis YPIII.</title>
        <authorList>
            <consortium name="US DOE Joint Genome Institute"/>
            <person name="Copeland A."/>
            <person name="Lucas S."/>
            <person name="Lapidus A."/>
            <person name="Glavina del Rio T."/>
            <person name="Dalin E."/>
            <person name="Tice H."/>
            <person name="Bruce D."/>
            <person name="Goodwin L."/>
            <person name="Pitluck S."/>
            <person name="Munk A.C."/>
            <person name="Brettin T."/>
            <person name="Detter J.C."/>
            <person name="Han C."/>
            <person name="Tapia R."/>
            <person name="Schmutz J."/>
            <person name="Larimer F."/>
            <person name="Land M."/>
            <person name="Hauser L."/>
            <person name="Challacombe J.F."/>
            <person name="Green L."/>
            <person name="Lindler L.E."/>
            <person name="Nikolich M.P."/>
            <person name="Richardson P."/>
        </authorList>
    </citation>
    <scope>NUCLEOTIDE SEQUENCE [LARGE SCALE GENOMIC DNA]</scope>
    <source>
        <strain>YPIII</strain>
    </source>
</reference>
<sequence>MSLKQHTQTIFRQQFDRESDITIKAPGRVNLIGEHTDYNDGFVLPCAINYETVISCGKRDDRQIRVIAADYENQQDIFSLDAPIVPHPEYRWADYVRGVVKHLQMRNADFGGADLVICGNVPQGAGLSSSASLEVAVGQALQSLYQLPLSGVELALNGQEAENQFVGCNCGIMDQLISALGKKDHALLIDCRTLETRAVPMPENMAVVIINSNIQRGLVDSEYNTRRQQCEAAARFFGVKALRDVEPSLFFSIQDELDPVVAKRARHVISENARTLAAADALAAGNLKLMGQLMQESHISMRDDFEITVPPIDRLVEIVKSVIGDQGGVRMTGGGFGGCIIALMPLELVEQVRTTVAQEYPAHSGGKKETFYVCQASQGAGLC</sequence>